<keyword id="KW-0433">Leucine-rich repeat</keyword>
<keyword id="KW-1185">Reference proteome</keyword>
<keyword id="KW-0677">Repeat</keyword>
<gene>
    <name type="ordered locus">At3g44810</name>
    <name type="ORF">T32N15.1</name>
</gene>
<protein>
    <recommendedName>
        <fullName>Putative F-box/LRR-repeat protein At3g44810</fullName>
    </recommendedName>
</protein>
<evidence type="ECO:0000255" key="1">
    <source>
        <dbReference type="PROSITE-ProRule" id="PRU00080"/>
    </source>
</evidence>
<evidence type="ECO:0000305" key="2"/>
<feature type="chain" id="PRO_0000281953" description="Putative F-box/LRR-repeat protein At3g44810">
    <location>
        <begin position="1"/>
        <end position="448"/>
    </location>
</feature>
<feature type="domain" description="F-box" evidence="1">
    <location>
        <begin position="6"/>
        <end position="54"/>
    </location>
</feature>
<feature type="repeat" description="LRR 1">
    <location>
        <begin position="117"/>
        <end position="141"/>
    </location>
</feature>
<feature type="repeat" description="LRR 2">
    <location>
        <begin position="143"/>
        <end position="165"/>
    </location>
</feature>
<feature type="repeat" description="LRR 3">
    <location>
        <begin position="190"/>
        <end position="213"/>
    </location>
</feature>
<feature type="repeat" description="LRR 4">
    <location>
        <begin position="228"/>
        <end position="251"/>
    </location>
</feature>
<feature type="repeat" description="LRR 5">
    <location>
        <begin position="290"/>
        <end position="313"/>
    </location>
</feature>
<feature type="repeat" description="LRR 6">
    <location>
        <begin position="421"/>
        <end position="443"/>
    </location>
</feature>
<sequence>MSSVSTASLNCLPDELLVHVLSSLETKQAASTSVLSKRWRTLFAVRRNLDFDDSIISHPEVGEQNMDDVQESFRDFVDKRLAFQGSVPINKFSLIYGDKHDDVRVDRWINTALEHGVSELHLCLTSVTRRLHRFPSNVFRSTTLVKLTLGTNLFIVYFPSDTCLPVLKILVLDSIWFDRIKFSNVLLAGCPALEDLTIDQKSFPGLPNVVSSKTVKSLSIVYKYSADFDWFRTVALDTPNLVTLLYSTYARHRYRHCNLESLVNATLDLHFLENCDEAFEPNVTDLMIAVRNVQMLHLTSSATEVISQCCKGGLPMFKNLLVLVFLGNTERVWKVFLPLLLEHSPNLTKLCLESLFLILQGLYHGTDEDEFDEIHIPRSNKVNMLRIIQCQGTENELKHISHFLLKMECLQLVQVNFSETIVDSKKVQLTEDLMKLPSASSRLTMQVI</sequence>
<proteinExistence type="predicted"/>
<organism>
    <name type="scientific">Arabidopsis thaliana</name>
    <name type="common">Mouse-ear cress</name>
    <dbReference type="NCBI Taxonomy" id="3702"/>
    <lineage>
        <taxon>Eukaryota</taxon>
        <taxon>Viridiplantae</taxon>
        <taxon>Streptophyta</taxon>
        <taxon>Embryophyta</taxon>
        <taxon>Tracheophyta</taxon>
        <taxon>Spermatophyta</taxon>
        <taxon>Magnoliopsida</taxon>
        <taxon>eudicotyledons</taxon>
        <taxon>Gunneridae</taxon>
        <taxon>Pentapetalae</taxon>
        <taxon>rosids</taxon>
        <taxon>malvids</taxon>
        <taxon>Brassicales</taxon>
        <taxon>Brassicaceae</taxon>
        <taxon>Camelineae</taxon>
        <taxon>Arabidopsis</taxon>
    </lineage>
</organism>
<accession>O22232</accession>
<name>FBL52_ARATH</name>
<dbReference type="EMBL" id="AC002534">
    <property type="protein sequence ID" value="AAB70026.1"/>
    <property type="status" value="ALT_INIT"/>
    <property type="molecule type" value="Genomic_DNA"/>
</dbReference>
<dbReference type="EMBL" id="CP002686">
    <property type="protein sequence ID" value="AEE77957.1"/>
    <property type="molecule type" value="Genomic_DNA"/>
</dbReference>
<dbReference type="RefSeq" id="NP_190067.1">
    <property type="nucleotide sequence ID" value="NM_114350.1"/>
</dbReference>
<dbReference type="FunCoup" id="O22232">
    <property type="interactions" value="76"/>
</dbReference>
<dbReference type="iPTMnet" id="O22232"/>
<dbReference type="PaxDb" id="3702-AT3G44810.1"/>
<dbReference type="ProteomicsDB" id="222514"/>
<dbReference type="EnsemblPlants" id="AT3G44810.1">
    <property type="protein sequence ID" value="AT3G44810.1"/>
    <property type="gene ID" value="AT3G44810"/>
</dbReference>
<dbReference type="GeneID" id="823615"/>
<dbReference type="Gramene" id="AT3G44810.1">
    <property type="protein sequence ID" value="AT3G44810.1"/>
    <property type="gene ID" value="AT3G44810"/>
</dbReference>
<dbReference type="KEGG" id="ath:AT3G44810"/>
<dbReference type="Araport" id="AT3G44810"/>
<dbReference type="TAIR" id="AT3G44810"/>
<dbReference type="HOGENOM" id="CLU_010721_7_4_1"/>
<dbReference type="InParanoid" id="O22232"/>
<dbReference type="OMA" id="DRWINTA"/>
<dbReference type="PhylomeDB" id="O22232"/>
<dbReference type="PRO" id="PR:O22232"/>
<dbReference type="Proteomes" id="UP000006548">
    <property type="component" value="Chromosome 3"/>
</dbReference>
<dbReference type="ExpressionAtlas" id="O22232">
    <property type="expression patterns" value="baseline and differential"/>
</dbReference>
<dbReference type="Gene3D" id="1.20.1280.50">
    <property type="match status" value="1"/>
</dbReference>
<dbReference type="InterPro" id="IPR036047">
    <property type="entry name" value="F-box-like_dom_sf"/>
</dbReference>
<dbReference type="InterPro" id="IPR001810">
    <property type="entry name" value="F-box_dom"/>
</dbReference>
<dbReference type="InterPro" id="IPR006566">
    <property type="entry name" value="FBD"/>
</dbReference>
<dbReference type="InterPro" id="IPR055294">
    <property type="entry name" value="FBL60-like"/>
</dbReference>
<dbReference type="InterPro" id="IPR055411">
    <property type="entry name" value="LRR_FXL15/At3g58940/PEG3-like"/>
</dbReference>
<dbReference type="PANTHER" id="PTHR31293:SF26">
    <property type="entry name" value="(RAPE) HYPOTHETICAL PROTEIN"/>
    <property type="match status" value="1"/>
</dbReference>
<dbReference type="PANTHER" id="PTHR31293">
    <property type="entry name" value="RNI-LIKE SUPERFAMILY PROTEIN"/>
    <property type="match status" value="1"/>
</dbReference>
<dbReference type="Pfam" id="PF00646">
    <property type="entry name" value="F-box"/>
    <property type="match status" value="1"/>
</dbReference>
<dbReference type="Pfam" id="PF24758">
    <property type="entry name" value="LRR_At5g56370"/>
    <property type="match status" value="1"/>
</dbReference>
<dbReference type="SMART" id="SM00579">
    <property type="entry name" value="FBD"/>
    <property type="match status" value="1"/>
</dbReference>
<dbReference type="SMART" id="SM00256">
    <property type="entry name" value="FBOX"/>
    <property type="match status" value="1"/>
</dbReference>
<dbReference type="SUPFAM" id="SSF81383">
    <property type="entry name" value="F-box domain"/>
    <property type="match status" value="1"/>
</dbReference>
<dbReference type="SUPFAM" id="SSF52058">
    <property type="entry name" value="L domain-like"/>
    <property type="match status" value="1"/>
</dbReference>
<dbReference type="PROSITE" id="PS50181">
    <property type="entry name" value="FBOX"/>
    <property type="match status" value="1"/>
</dbReference>
<reference key="1">
    <citation type="journal article" date="2000" name="Nature">
        <title>Sequence and analysis of chromosome 3 of the plant Arabidopsis thaliana.</title>
        <authorList>
            <person name="Salanoubat M."/>
            <person name="Lemcke K."/>
            <person name="Rieger M."/>
            <person name="Ansorge W."/>
            <person name="Unseld M."/>
            <person name="Fartmann B."/>
            <person name="Valle G."/>
            <person name="Bloecker H."/>
            <person name="Perez-Alonso M."/>
            <person name="Obermaier B."/>
            <person name="Delseny M."/>
            <person name="Boutry M."/>
            <person name="Grivell L.A."/>
            <person name="Mache R."/>
            <person name="Puigdomenech P."/>
            <person name="De Simone V."/>
            <person name="Choisne N."/>
            <person name="Artiguenave F."/>
            <person name="Robert C."/>
            <person name="Brottier P."/>
            <person name="Wincker P."/>
            <person name="Cattolico L."/>
            <person name="Weissenbach J."/>
            <person name="Saurin W."/>
            <person name="Quetier F."/>
            <person name="Schaefer M."/>
            <person name="Mueller-Auer S."/>
            <person name="Gabel C."/>
            <person name="Fuchs M."/>
            <person name="Benes V."/>
            <person name="Wurmbach E."/>
            <person name="Drzonek H."/>
            <person name="Erfle H."/>
            <person name="Jordan N."/>
            <person name="Bangert S."/>
            <person name="Wiedelmann R."/>
            <person name="Kranz H."/>
            <person name="Voss H."/>
            <person name="Holland R."/>
            <person name="Brandt P."/>
            <person name="Nyakatura G."/>
            <person name="Vezzi A."/>
            <person name="D'Angelo M."/>
            <person name="Pallavicini A."/>
            <person name="Toppo S."/>
            <person name="Simionati B."/>
            <person name="Conrad A."/>
            <person name="Hornischer K."/>
            <person name="Kauer G."/>
            <person name="Loehnert T.-H."/>
            <person name="Nordsiek G."/>
            <person name="Reichelt J."/>
            <person name="Scharfe M."/>
            <person name="Schoen O."/>
            <person name="Bargues M."/>
            <person name="Terol J."/>
            <person name="Climent J."/>
            <person name="Navarro P."/>
            <person name="Collado C."/>
            <person name="Perez-Perez A."/>
            <person name="Ottenwaelder B."/>
            <person name="Duchemin D."/>
            <person name="Cooke R."/>
            <person name="Laudie M."/>
            <person name="Berger-Llauro C."/>
            <person name="Purnelle B."/>
            <person name="Masuy D."/>
            <person name="de Haan M."/>
            <person name="Maarse A.C."/>
            <person name="Alcaraz J.-P."/>
            <person name="Cottet A."/>
            <person name="Casacuberta E."/>
            <person name="Monfort A."/>
            <person name="Argiriou A."/>
            <person name="Flores M."/>
            <person name="Liguori R."/>
            <person name="Vitale D."/>
            <person name="Mannhaupt G."/>
            <person name="Haase D."/>
            <person name="Schoof H."/>
            <person name="Rudd S."/>
            <person name="Zaccaria P."/>
            <person name="Mewes H.-W."/>
            <person name="Mayer K.F.X."/>
            <person name="Kaul S."/>
            <person name="Town C.D."/>
            <person name="Koo H.L."/>
            <person name="Tallon L.J."/>
            <person name="Jenkins J."/>
            <person name="Rooney T."/>
            <person name="Rizzo M."/>
            <person name="Walts A."/>
            <person name="Utterback T."/>
            <person name="Fujii C.Y."/>
            <person name="Shea T.P."/>
            <person name="Creasy T.H."/>
            <person name="Haas B."/>
            <person name="Maiti R."/>
            <person name="Wu D."/>
            <person name="Peterson J."/>
            <person name="Van Aken S."/>
            <person name="Pai G."/>
            <person name="Militscher J."/>
            <person name="Sellers P."/>
            <person name="Gill J.E."/>
            <person name="Feldblyum T.V."/>
            <person name="Preuss D."/>
            <person name="Lin X."/>
            <person name="Nierman W.C."/>
            <person name="Salzberg S.L."/>
            <person name="White O."/>
            <person name="Venter J.C."/>
            <person name="Fraser C.M."/>
            <person name="Kaneko T."/>
            <person name="Nakamura Y."/>
            <person name="Sato S."/>
            <person name="Kato T."/>
            <person name="Asamizu E."/>
            <person name="Sasamoto S."/>
            <person name="Kimura T."/>
            <person name="Idesawa K."/>
            <person name="Kawashima K."/>
            <person name="Kishida Y."/>
            <person name="Kiyokawa C."/>
            <person name="Kohara M."/>
            <person name="Matsumoto M."/>
            <person name="Matsuno A."/>
            <person name="Muraki A."/>
            <person name="Nakayama S."/>
            <person name="Nakazaki N."/>
            <person name="Shinpo S."/>
            <person name="Takeuchi C."/>
            <person name="Wada T."/>
            <person name="Watanabe A."/>
            <person name="Yamada M."/>
            <person name="Yasuda M."/>
            <person name="Tabata S."/>
        </authorList>
    </citation>
    <scope>NUCLEOTIDE SEQUENCE [LARGE SCALE GENOMIC DNA]</scope>
    <source>
        <strain>cv. Columbia</strain>
    </source>
</reference>
<reference key="2">
    <citation type="journal article" date="2017" name="Plant J.">
        <title>Araport11: a complete reannotation of the Arabidopsis thaliana reference genome.</title>
        <authorList>
            <person name="Cheng C.Y."/>
            <person name="Krishnakumar V."/>
            <person name="Chan A.P."/>
            <person name="Thibaud-Nissen F."/>
            <person name="Schobel S."/>
            <person name="Town C.D."/>
        </authorList>
    </citation>
    <scope>GENOME REANNOTATION</scope>
    <source>
        <strain>cv. Columbia</strain>
    </source>
</reference>
<comment type="sequence caution" evidence="2">
    <conflict type="erroneous initiation">
        <sequence resource="EMBL-CDS" id="AAB70026"/>
    </conflict>
</comment>